<proteinExistence type="evidence at protein level"/>
<accession>Q08226</accession>
<accession>D6W204</accession>
<accession>Q6B2N4</accession>
<accession>Q7LGP7</accession>
<reference key="1">
    <citation type="journal article" date="1997" name="Nature">
        <title>The nucleotide sequence of Saccharomyces cerevisiae chromosome XV.</title>
        <authorList>
            <person name="Dujon B."/>
            <person name="Albermann K."/>
            <person name="Aldea M."/>
            <person name="Alexandraki D."/>
            <person name="Ansorge W."/>
            <person name="Arino J."/>
            <person name="Benes V."/>
            <person name="Bohn C."/>
            <person name="Bolotin-Fukuhara M."/>
            <person name="Bordonne R."/>
            <person name="Boyer J."/>
            <person name="Camasses A."/>
            <person name="Casamayor A."/>
            <person name="Casas C."/>
            <person name="Cheret G."/>
            <person name="Cziepluch C."/>
            <person name="Daignan-Fornier B."/>
            <person name="Dang V.-D."/>
            <person name="de Haan M."/>
            <person name="Delius H."/>
            <person name="Durand P."/>
            <person name="Fairhead C."/>
            <person name="Feldmann H."/>
            <person name="Gaillon L."/>
            <person name="Galisson F."/>
            <person name="Gamo F.-J."/>
            <person name="Gancedo C."/>
            <person name="Goffeau A."/>
            <person name="Goulding S.E."/>
            <person name="Grivell L.A."/>
            <person name="Habbig B."/>
            <person name="Hand N.J."/>
            <person name="Hani J."/>
            <person name="Hattenhorst U."/>
            <person name="Hebling U."/>
            <person name="Hernando Y."/>
            <person name="Herrero E."/>
            <person name="Heumann K."/>
            <person name="Hiesel R."/>
            <person name="Hilger F."/>
            <person name="Hofmann B."/>
            <person name="Hollenberg C.P."/>
            <person name="Hughes B."/>
            <person name="Jauniaux J.-C."/>
            <person name="Kalogeropoulos A."/>
            <person name="Katsoulou C."/>
            <person name="Kordes E."/>
            <person name="Lafuente M.J."/>
            <person name="Landt O."/>
            <person name="Louis E.J."/>
            <person name="Maarse A.C."/>
            <person name="Madania A."/>
            <person name="Mannhaupt G."/>
            <person name="Marck C."/>
            <person name="Martin R.P."/>
            <person name="Mewes H.-W."/>
            <person name="Michaux G."/>
            <person name="Paces V."/>
            <person name="Parle-McDermott A.G."/>
            <person name="Pearson B.M."/>
            <person name="Perrin A."/>
            <person name="Pettersson B."/>
            <person name="Poch O."/>
            <person name="Pohl T.M."/>
            <person name="Poirey R."/>
            <person name="Portetelle D."/>
            <person name="Pujol A."/>
            <person name="Purnelle B."/>
            <person name="Ramezani Rad M."/>
            <person name="Rechmann S."/>
            <person name="Schwager C."/>
            <person name="Schweizer M."/>
            <person name="Sor F."/>
            <person name="Sterky F."/>
            <person name="Tarassov I.A."/>
            <person name="Teodoru C."/>
            <person name="Tettelin H."/>
            <person name="Thierry A."/>
            <person name="Tobiasch E."/>
            <person name="Tzermia M."/>
            <person name="Uhlen M."/>
            <person name="Unseld M."/>
            <person name="Valens M."/>
            <person name="Vandenbol M."/>
            <person name="Vetter I."/>
            <person name="Vlcek C."/>
            <person name="Voet M."/>
            <person name="Volckaert G."/>
            <person name="Voss H."/>
            <person name="Wambutt R."/>
            <person name="Wedler H."/>
            <person name="Wiemann S."/>
            <person name="Winsor B."/>
            <person name="Wolfe K.H."/>
            <person name="Zollner A."/>
            <person name="Zumstein E."/>
            <person name="Kleine K."/>
        </authorList>
    </citation>
    <scope>NUCLEOTIDE SEQUENCE [LARGE SCALE GENOMIC DNA]</scope>
    <source>
        <strain>ATCC 204508 / S288c</strain>
    </source>
</reference>
<reference key="2">
    <citation type="journal article" date="2014" name="G3 (Bethesda)">
        <title>The reference genome sequence of Saccharomyces cerevisiae: Then and now.</title>
        <authorList>
            <person name="Engel S.R."/>
            <person name="Dietrich F.S."/>
            <person name="Fisk D.G."/>
            <person name="Binkley G."/>
            <person name="Balakrishnan R."/>
            <person name="Costanzo M.C."/>
            <person name="Dwight S.S."/>
            <person name="Hitz B.C."/>
            <person name="Karra K."/>
            <person name="Nash R.S."/>
            <person name="Weng S."/>
            <person name="Wong E.D."/>
            <person name="Lloyd P."/>
            <person name="Skrzypek M.S."/>
            <person name="Miyasato S.R."/>
            <person name="Simison M."/>
            <person name="Cherry J.M."/>
        </authorList>
    </citation>
    <scope>GENOME REANNOTATION</scope>
    <source>
        <strain>ATCC 204508 / S288c</strain>
    </source>
</reference>
<reference key="3">
    <citation type="journal article" date="2007" name="Genome Res.">
        <title>Approaching a complete repository of sequence-verified protein-encoding clones for Saccharomyces cerevisiae.</title>
        <authorList>
            <person name="Hu Y."/>
            <person name="Rolfs A."/>
            <person name="Bhullar B."/>
            <person name="Murthy T.V.S."/>
            <person name="Zhu C."/>
            <person name="Berger M.F."/>
            <person name="Camargo A.A."/>
            <person name="Kelley F."/>
            <person name="McCarron S."/>
            <person name="Jepson D."/>
            <person name="Richardson A."/>
            <person name="Raphael J."/>
            <person name="Moreira D."/>
            <person name="Taycher E."/>
            <person name="Zuo D."/>
            <person name="Mohr S."/>
            <person name="Kane M.F."/>
            <person name="Williamson J."/>
            <person name="Simpson A.J.G."/>
            <person name="Bulyk M.L."/>
            <person name="Harlow E."/>
            <person name="Marsischky G."/>
            <person name="Kolodner R.D."/>
            <person name="LaBaer J."/>
        </authorList>
    </citation>
    <scope>NUCLEOTIDE SEQUENCE [GENOMIC DNA]</scope>
    <source>
        <strain>ATCC 204508 / S288c</strain>
    </source>
</reference>
<reference key="4">
    <citation type="journal article" date="2003" name="Nature">
        <title>Global analysis of protein expression in yeast.</title>
        <authorList>
            <person name="Ghaemmaghami S."/>
            <person name="Huh W.-K."/>
            <person name="Bower K."/>
            <person name="Howson R.W."/>
            <person name="Belle A."/>
            <person name="Dephoure N."/>
            <person name="O'Shea E.K."/>
            <person name="Weissman J.S."/>
        </authorList>
    </citation>
    <scope>LEVEL OF PROTEIN EXPRESSION [LARGE SCALE ANALYSIS]</scope>
</reference>
<reference key="5">
    <citation type="journal article" date="2006" name="Nucleic Acids Res.">
        <title>Identification and characterization of CRT10 as a novel regulator of Saccharomyces cerevisiae ribonucleotide reductase genes.</title>
        <authorList>
            <person name="Fu Y."/>
            <person name="Xiao W."/>
        </authorList>
    </citation>
    <scope>FUNCTION</scope>
    <scope>INDUCTION</scope>
</reference>
<reference key="6">
    <citation type="journal article" date="2008" name="EMBO Rep.">
        <title>Rtt101 and Mms1 in budding yeast form a CUL4(DDB1)-like ubiquitin ligase that promotes replication through damaged DNA.</title>
        <authorList>
            <person name="Zaidi I.W."/>
            <person name="Rabut G."/>
            <person name="Poveda A."/>
            <person name="Scheel H."/>
            <person name="Malmstrom J."/>
            <person name="Ulrich H."/>
            <person name="Hofmann K."/>
            <person name="Pasero P."/>
            <person name="Peter M."/>
            <person name="Luke B."/>
        </authorList>
    </citation>
    <scope>FUNCTION</scope>
    <scope>INTERACTION WITH MMS1</scope>
    <scope>IDENTIFICATION IN A COMPLEX WITH RTT101</scope>
</reference>
<reference key="7">
    <citation type="journal article" date="2009" name="Science">
        <title>Global analysis of Cdk1 substrate phosphorylation sites provides insights into evolution.</title>
        <authorList>
            <person name="Holt L.J."/>
            <person name="Tuch B.B."/>
            <person name="Villen J."/>
            <person name="Johnson A.D."/>
            <person name="Gygi S.P."/>
            <person name="Morgan D.O."/>
        </authorList>
    </citation>
    <scope>PHOSPHORYLATION [LARGE SCALE ANALYSIS] AT SER-704</scope>
    <scope>IDENTIFICATION BY MASS SPECTROMETRY [LARGE SCALE ANALYSIS]</scope>
</reference>
<sequence length="957" mass="109715">MPPQIPNENDDLFTRWLKSRAIIQRAVSTRECFDSEVFLASGGWNITNEIITLKKYYQLKWPNSSCNSFHPKTVEFIKERLHNLEEHDSSWKIPNPAYSFKKAFLEDTKSAFSNLEPVWGPSRLLNPAELLLPQDEKLLVQEIPLEFAPFQYTNRFAYGGLQFKNNLFVTYGSYSFLAAGQCVEVHNFDILLNVSSLEICHALLPVIIPDDGDVRNFRNSSYVKFKDTQFNSIPELCSINFMKICNFMHQDFLLACGDNGIVYIWEINKVIKIFNKFTSDILGGKDNSRERYINVDPYMVLRVEESCWSVDVIDINGIIYIAVGHNKPGVTVFAFDKDVKKERRYIRPLDLPSSHNVPCVNFVPNSKDSVGYITLSYCSIFGNVVTVKLKEHDCTILTSFLDTQFFGDDLWTITPLTKKDFAKVDNFELLNLNYQDGFKESMLYSICRDDFLLGYYCDNAYLSGNFGIGTLLNQFQVPVTDLRLTSSAGIPDEVIPLRFTSFDRNYTTTGSIKYEYSREDFALILHAGDLDDMNDAVTKNTSCEQHLHQWTFWEDSGYKHYRATERGFSKYKDIINTFPQLITPSGRNKTSQYQNTSGRKICEPSTYKLTDLENDIEDISREFNRSIRNLKMDKQRQLRTSKEFKSLSSVNHIPNIESGNFLWYNTDAAADWRTLFGKDLNTVLKDPEICSLQLNSTEEDDVNSDPENEESGSSLTSFQRRYRDTEQRAHLKSESQKSWGFHNYVRNVKRLLESAVPGSEDSPLGYQLSEMHDEFFFLTTAHRLVLMKANPLIIISATHHEIFPLDGVVTCASKSLLQALNRINFVCHIKELNCIAVASQLGLISLLRLTEYRGIYSFRQEYILGWEVQDPVNPSPECRCNRNLFDAPMYGADGESSDTYCGVCDVYFPMGDICGLDYTYASDSEELKRKGYATLYVASRGSLRAFKITTEHGTTQQ</sequence>
<keyword id="KW-0597">Phosphoprotein</keyword>
<keyword id="KW-1185">Reference proteome</keyword>
<keyword id="KW-0804">Transcription</keyword>
<keyword id="KW-0805">Transcription regulation</keyword>
<comment type="function">
    <text evidence="3 4">Substrate targeting component of a cullin-RING-based E3 ubiquitin-protein ligase complex RTT101(MMS1-CRT10). RTT101(MMS1-CRT10) may regulate nucleotide synthesis through transcriptional regulation of RNR genes encoding ribonucleotide reductases.</text>
</comment>
<comment type="subunit">
    <text evidence="4">Component of a cullin-RING ligase (CRL) composed of 4 subunits: the RING protein HRT1, the cullin RTT101, a linker protein MMS1, and the substrate receptor CRT10. Interacts with MMS1.</text>
</comment>
<comment type="interaction">
    <interactant intactId="EBI-30025">
        <id>Q08226</id>
    </interactant>
    <interactant intactId="EBI-25861">
        <id>P47050</id>
        <label>RTT101</label>
    </interactant>
    <organismsDiffer>false</organismsDiffer>
    <experiments>2</experiments>
</comment>
<comment type="induction">
    <text evidence="3">By DNA damage and hydroxyurea (HU).</text>
</comment>
<comment type="miscellaneous">
    <text evidence="2">Present with 125 molecules/cell in log phase SD medium.</text>
</comment>
<organism>
    <name type="scientific">Saccharomyces cerevisiae (strain ATCC 204508 / S288c)</name>
    <name type="common">Baker's yeast</name>
    <dbReference type="NCBI Taxonomy" id="559292"/>
    <lineage>
        <taxon>Eukaryota</taxon>
        <taxon>Fungi</taxon>
        <taxon>Dikarya</taxon>
        <taxon>Ascomycota</taxon>
        <taxon>Saccharomycotina</taxon>
        <taxon>Saccharomycetes</taxon>
        <taxon>Saccharomycetales</taxon>
        <taxon>Saccharomycetaceae</taxon>
        <taxon>Saccharomyces</taxon>
    </lineage>
</organism>
<name>CRT10_YEAST</name>
<dbReference type="EMBL" id="Z74804">
    <property type="protein sequence ID" value="CAA99072.1"/>
    <property type="molecule type" value="Genomic_DNA"/>
</dbReference>
<dbReference type="EMBL" id="Z74805">
    <property type="protein sequence ID" value="CAA99073.1"/>
    <property type="molecule type" value="Genomic_DNA"/>
</dbReference>
<dbReference type="EMBL" id="AY692696">
    <property type="protein sequence ID" value="AAT92715.1"/>
    <property type="molecule type" value="Genomic_DNA"/>
</dbReference>
<dbReference type="EMBL" id="BK006948">
    <property type="protein sequence ID" value="DAA10720.1"/>
    <property type="molecule type" value="Genomic_DNA"/>
</dbReference>
<dbReference type="PIR" id="S66755">
    <property type="entry name" value="S66755"/>
</dbReference>
<dbReference type="RefSeq" id="NP_014578.1">
    <property type="nucleotide sequence ID" value="NM_001183318.1"/>
</dbReference>
<dbReference type="BioGRID" id="34338">
    <property type="interactions" value="66"/>
</dbReference>
<dbReference type="DIP" id="DIP-2832N"/>
<dbReference type="FunCoup" id="Q08226">
    <property type="interactions" value="116"/>
</dbReference>
<dbReference type="IntAct" id="Q08226">
    <property type="interactions" value="12"/>
</dbReference>
<dbReference type="MINT" id="Q08226"/>
<dbReference type="STRING" id="4932.YOL063C"/>
<dbReference type="iPTMnet" id="Q08226"/>
<dbReference type="PaxDb" id="4932-YOL063C"/>
<dbReference type="PeptideAtlas" id="Q08226"/>
<dbReference type="EnsemblFungi" id="YOL063C_mRNA">
    <property type="protein sequence ID" value="YOL063C"/>
    <property type="gene ID" value="YOL063C"/>
</dbReference>
<dbReference type="GeneID" id="854091"/>
<dbReference type="KEGG" id="sce:YOL063C"/>
<dbReference type="AGR" id="SGD:S000005424"/>
<dbReference type="SGD" id="S000005424">
    <property type="gene designation" value="CRT10"/>
</dbReference>
<dbReference type="VEuPathDB" id="FungiDB:YOL063C"/>
<dbReference type="eggNOG" id="ENOG502RAS5">
    <property type="taxonomic scope" value="Eukaryota"/>
</dbReference>
<dbReference type="HOGENOM" id="CLU_013329_0_0_1"/>
<dbReference type="InParanoid" id="Q08226"/>
<dbReference type="OMA" id="YSFRQEY"/>
<dbReference type="OrthoDB" id="4068815at2759"/>
<dbReference type="BioCyc" id="YEAST:G3O-33471-MONOMER"/>
<dbReference type="BioGRID-ORCS" id="854091">
    <property type="hits" value="0 hits in 10 CRISPR screens"/>
</dbReference>
<dbReference type="PRO" id="PR:Q08226"/>
<dbReference type="Proteomes" id="UP000002311">
    <property type="component" value="Chromosome XV"/>
</dbReference>
<dbReference type="RNAct" id="Q08226">
    <property type="molecule type" value="protein"/>
</dbReference>
<dbReference type="GO" id="GO:0070651">
    <property type="term" value="P:nonfunctional rRNA decay"/>
    <property type="evidence" value="ECO:0000315"/>
    <property type="project" value="SGD"/>
</dbReference>
<dbReference type="InterPro" id="IPR014839">
    <property type="entry name" value="Crt10"/>
</dbReference>
<dbReference type="Pfam" id="PF08728">
    <property type="entry name" value="CRT10"/>
    <property type="match status" value="2"/>
</dbReference>
<protein>
    <recommendedName>
        <fullName>Protein CRT10</fullName>
    </recommendedName>
    <alternativeName>
        <fullName>Constitutive RNR transcription regulator 10</fullName>
    </alternativeName>
</protein>
<feature type="chain" id="PRO_0000235920" description="Protein CRT10">
    <location>
        <begin position="1"/>
        <end position="957"/>
    </location>
</feature>
<feature type="region of interest" description="Disordered" evidence="1">
    <location>
        <begin position="695"/>
        <end position="719"/>
    </location>
</feature>
<feature type="compositionally biased region" description="Acidic residues" evidence="1">
    <location>
        <begin position="697"/>
        <end position="710"/>
    </location>
</feature>
<feature type="modified residue" description="Phosphoserine" evidence="6">
    <location>
        <position position="704"/>
    </location>
</feature>
<feature type="sequence conflict" description="In Ref. 3; AAT92715." evidence="5" ref="3">
    <original>P</original>
    <variation>S</variation>
    <location>
        <position position="604"/>
    </location>
</feature>
<gene>
    <name type="primary">CRT10</name>
    <name type="ordered locus">YOL063C</name>
</gene>
<evidence type="ECO:0000256" key="1">
    <source>
        <dbReference type="SAM" id="MobiDB-lite"/>
    </source>
</evidence>
<evidence type="ECO:0000269" key="2">
    <source>
    </source>
</evidence>
<evidence type="ECO:0000269" key="3">
    <source>
    </source>
</evidence>
<evidence type="ECO:0000269" key="4">
    <source>
    </source>
</evidence>
<evidence type="ECO:0000305" key="5"/>
<evidence type="ECO:0007744" key="6">
    <source>
    </source>
</evidence>